<protein>
    <recommendedName>
        <fullName>Sensor protein LytS</fullName>
        <ecNumber>2.7.13.3</ecNumber>
    </recommendedName>
    <alternativeName>
        <fullName>Autolysin sensor kinase</fullName>
    </alternativeName>
</protein>
<accession>Q4A009</accession>
<feature type="chain" id="PRO_0000292217" description="Sensor protein LytS">
    <location>
        <begin position="1"/>
        <end position="591"/>
    </location>
</feature>
<feature type="transmembrane region" description="Helical" evidence="2">
    <location>
        <begin position="2"/>
        <end position="22"/>
    </location>
</feature>
<feature type="transmembrane region" description="Helical" evidence="2">
    <location>
        <begin position="42"/>
        <end position="62"/>
    </location>
</feature>
<feature type="transmembrane region" description="Helical" evidence="2">
    <location>
        <begin position="88"/>
        <end position="108"/>
    </location>
</feature>
<feature type="transmembrane region" description="Helical" evidence="2">
    <location>
        <begin position="114"/>
        <end position="134"/>
    </location>
</feature>
<feature type="transmembrane region" description="Helical" evidence="2">
    <location>
        <begin position="151"/>
        <end position="171"/>
    </location>
</feature>
<feature type="transmembrane region" description="Helical" evidence="2">
    <location>
        <begin position="185"/>
        <end position="205"/>
    </location>
</feature>
<feature type="domain" description="Histidine kinase">
    <location>
        <begin position="379"/>
        <end position="461"/>
    </location>
</feature>
<feature type="modified residue" description="Phosphohistidine; by autocatalysis" evidence="1">
    <location>
        <position position="390"/>
    </location>
</feature>
<keyword id="KW-0067">ATP-binding</keyword>
<keyword id="KW-1003">Cell membrane</keyword>
<keyword id="KW-0418">Kinase</keyword>
<keyword id="KW-0472">Membrane</keyword>
<keyword id="KW-0547">Nucleotide-binding</keyword>
<keyword id="KW-0597">Phosphoprotein</keyword>
<keyword id="KW-1185">Reference proteome</keyword>
<keyword id="KW-0808">Transferase</keyword>
<keyword id="KW-0812">Transmembrane</keyword>
<keyword id="KW-1133">Transmembrane helix</keyword>
<keyword id="KW-0902">Two-component regulatory system</keyword>
<dbReference type="EC" id="2.7.13.3"/>
<dbReference type="EMBL" id="AP008934">
    <property type="protein sequence ID" value="BAE17609.1"/>
    <property type="molecule type" value="Genomic_DNA"/>
</dbReference>
<dbReference type="RefSeq" id="WP_011302423.1">
    <property type="nucleotide sequence ID" value="NZ_MTGA01000036.1"/>
</dbReference>
<dbReference type="SMR" id="Q4A009"/>
<dbReference type="GeneID" id="3616212"/>
<dbReference type="KEGG" id="ssp:SSP0464"/>
<dbReference type="PATRIC" id="fig|342451.11.peg.469"/>
<dbReference type="eggNOG" id="COG3275">
    <property type="taxonomic scope" value="Bacteria"/>
</dbReference>
<dbReference type="HOGENOM" id="CLU_020473_3_3_9"/>
<dbReference type="OrthoDB" id="9776552at2"/>
<dbReference type="Proteomes" id="UP000006371">
    <property type="component" value="Chromosome"/>
</dbReference>
<dbReference type="GO" id="GO:0005886">
    <property type="term" value="C:plasma membrane"/>
    <property type="evidence" value="ECO:0007669"/>
    <property type="project" value="UniProtKB-SubCell"/>
</dbReference>
<dbReference type="GO" id="GO:0005524">
    <property type="term" value="F:ATP binding"/>
    <property type="evidence" value="ECO:0007669"/>
    <property type="project" value="UniProtKB-KW"/>
</dbReference>
<dbReference type="GO" id="GO:0000155">
    <property type="term" value="F:phosphorelay sensor kinase activity"/>
    <property type="evidence" value="ECO:0007669"/>
    <property type="project" value="InterPro"/>
</dbReference>
<dbReference type="GO" id="GO:0071555">
    <property type="term" value="P:cell wall organization"/>
    <property type="evidence" value="ECO:0007669"/>
    <property type="project" value="InterPro"/>
</dbReference>
<dbReference type="CDD" id="cd16957">
    <property type="entry name" value="HATPase_LytS-like"/>
    <property type="match status" value="1"/>
</dbReference>
<dbReference type="Gene3D" id="3.30.450.40">
    <property type="match status" value="1"/>
</dbReference>
<dbReference type="Gene3D" id="3.30.565.10">
    <property type="entry name" value="Histidine kinase-like ATPase, C-terminal domain"/>
    <property type="match status" value="1"/>
</dbReference>
<dbReference type="InterPro" id="IPR050640">
    <property type="entry name" value="Bact_2-comp_sensor_kinase"/>
</dbReference>
<dbReference type="InterPro" id="IPR003018">
    <property type="entry name" value="GAF"/>
</dbReference>
<dbReference type="InterPro" id="IPR029016">
    <property type="entry name" value="GAF-like_dom_sf"/>
</dbReference>
<dbReference type="InterPro" id="IPR036890">
    <property type="entry name" value="HATPase_C_sf"/>
</dbReference>
<dbReference type="InterPro" id="IPR010559">
    <property type="entry name" value="Sig_transdc_His_kin_internal"/>
</dbReference>
<dbReference type="InterPro" id="IPR011620">
    <property type="entry name" value="Sig_transdc_His_kinase_LytS_TM"/>
</dbReference>
<dbReference type="PANTHER" id="PTHR34220">
    <property type="entry name" value="SENSOR HISTIDINE KINASE YPDA"/>
    <property type="match status" value="1"/>
</dbReference>
<dbReference type="PANTHER" id="PTHR34220:SF7">
    <property type="entry name" value="SENSOR HISTIDINE KINASE YPDA"/>
    <property type="match status" value="1"/>
</dbReference>
<dbReference type="Pfam" id="PF07694">
    <property type="entry name" value="5TM-5TMR_LYT"/>
    <property type="match status" value="1"/>
</dbReference>
<dbReference type="Pfam" id="PF13492">
    <property type="entry name" value="GAF_3"/>
    <property type="match status" value="1"/>
</dbReference>
<dbReference type="Pfam" id="PF02518">
    <property type="entry name" value="HATPase_c"/>
    <property type="match status" value="1"/>
</dbReference>
<dbReference type="Pfam" id="PF06580">
    <property type="entry name" value="His_kinase"/>
    <property type="match status" value="1"/>
</dbReference>
<dbReference type="SMART" id="SM00065">
    <property type="entry name" value="GAF"/>
    <property type="match status" value="1"/>
</dbReference>
<dbReference type="SMART" id="SM00387">
    <property type="entry name" value="HATPase_c"/>
    <property type="match status" value="1"/>
</dbReference>
<dbReference type="SUPFAM" id="SSF55874">
    <property type="entry name" value="ATPase domain of HSP90 chaperone/DNA topoisomerase II/histidine kinase"/>
    <property type="match status" value="1"/>
</dbReference>
<gene>
    <name type="primary">lytS</name>
    <name type="ordered locus">SSP0464</name>
</gene>
<proteinExistence type="inferred from homology"/>
<reference key="1">
    <citation type="journal article" date="2005" name="Proc. Natl. Acad. Sci. U.S.A.">
        <title>Whole genome sequence of Staphylococcus saprophyticus reveals the pathogenesis of uncomplicated urinary tract infection.</title>
        <authorList>
            <person name="Kuroda M."/>
            <person name="Yamashita A."/>
            <person name="Hirakawa H."/>
            <person name="Kumano M."/>
            <person name="Morikawa K."/>
            <person name="Higashide M."/>
            <person name="Maruyama A."/>
            <person name="Inose Y."/>
            <person name="Matoba K."/>
            <person name="Toh H."/>
            <person name="Kuhara S."/>
            <person name="Hattori M."/>
            <person name="Ohta T."/>
        </authorList>
    </citation>
    <scope>NUCLEOTIDE SEQUENCE [LARGE SCALE GENOMIC DNA]</scope>
    <source>
        <strain>ATCC 15305 / DSM 20229 / NCIMB 8711 / NCTC 7292 / S-41</strain>
    </source>
</reference>
<evidence type="ECO:0000250" key="1"/>
<evidence type="ECO:0000255" key="2"/>
<name>LYTS_STAS1</name>
<comment type="function">
    <text evidence="1">Member of the two-component regulatory system LytR/LytS that probably regulates genes involved in cell wall metabolism.</text>
</comment>
<comment type="catalytic activity">
    <reaction>
        <text>ATP + protein L-histidine = ADP + protein N-phospho-L-histidine.</text>
        <dbReference type="EC" id="2.7.13.3"/>
    </reaction>
</comment>
<comment type="subcellular location">
    <subcellularLocation>
        <location evidence="1">Cell membrane</location>
        <topology evidence="1">Multi-pass membrane protein</topology>
    </subcellularLocation>
</comment>
<organism>
    <name type="scientific">Staphylococcus saprophyticus subsp. saprophyticus (strain ATCC 15305 / DSM 20229 / NCIMB 8711 / NCTC 7292 / S-41)</name>
    <dbReference type="NCBI Taxonomy" id="342451"/>
    <lineage>
        <taxon>Bacteria</taxon>
        <taxon>Bacillati</taxon>
        <taxon>Bacillota</taxon>
        <taxon>Bacilli</taxon>
        <taxon>Bacillales</taxon>
        <taxon>Staphylococcaceae</taxon>
        <taxon>Staphylococcus</taxon>
    </lineage>
</organism>
<sequence>MLNLFILLLERVGLIILIAYILMNINHFKTMMNEREKRRSQWQLIIIFGCFSMISNFTGIQIRGDEIINGTVYNHLDPDASLANTRVLTIGVSGLIGGPFVALAVAVISGMYRVYIGGADAYIYLISSIFIALISGYFGYKAMRANRYPTIVKGACIGGTTEIIQMLCILLFSDNTEHAWTLVKLIAIPMISINSIGTAIFLSIILSTIKQEEETRAIQTHDVLQLANQTLPYFRSGLNEQSAKKAAEIILNLMRVSAVAITNRKDILTHVGVASDHHVAQKAIITNLSKRAIQSGTLKEAYSSEEIGCNHPGCPLEAAIVVPLRVKNDVVGTLKLYFTNKYDVNYSDKQLATGLAEIFSSQLELGQAETQSALIRDAEIKSLQAQVNPHFFFNAINTISALIRIDSEKARELLLQLSQFFRSNLQGARNNTISLEKELQQVESYLSLEQARYPDRFNVSFDIDRTCYGALVPPFAIQILVENAIKHAFKNRKYNNEIIVKAHKAQTGLVISVSDNGHGIPYEKLDKIGKTSVHSESGTGSALENLNRRLDGLFGYEASLQIHSDHQGTQVSCTIPYHNLEEEKIESNHCR</sequence>